<organism>
    <name type="scientific">Rattus norvegicus</name>
    <name type="common">Rat</name>
    <dbReference type="NCBI Taxonomy" id="10116"/>
    <lineage>
        <taxon>Eukaryota</taxon>
        <taxon>Metazoa</taxon>
        <taxon>Chordata</taxon>
        <taxon>Craniata</taxon>
        <taxon>Vertebrata</taxon>
        <taxon>Euteleostomi</taxon>
        <taxon>Mammalia</taxon>
        <taxon>Eutheria</taxon>
        <taxon>Euarchontoglires</taxon>
        <taxon>Glires</taxon>
        <taxon>Rodentia</taxon>
        <taxon>Myomorpha</taxon>
        <taxon>Muroidea</taxon>
        <taxon>Muridae</taxon>
        <taxon>Murinae</taxon>
        <taxon>Rattus</taxon>
    </lineage>
</organism>
<dbReference type="EC" id="1.1.99.1" evidence="6"/>
<dbReference type="EMBL" id="AY365023">
    <property type="protein sequence ID" value="AAQ67365.1"/>
    <property type="molecule type" value="mRNA"/>
</dbReference>
<dbReference type="EMBL" id="CH474046">
    <property type="protein sequence ID" value="EDL89007.1"/>
    <property type="molecule type" value="Genomic_DNA"/>
</dbReference>
<dbReference type="EMBL" id="BC085787">
    <property type="protein sequence ID" value="AAH85787.1"/>
    <property type="molecule type" value="mRNA"/>
</dbReference>
<dbReference type="RefSeq" id="NP_942026.1">
    <property type="nucleotide sequence ID" value="NM_198731.3"/>
</dbReference>
<dbReference type="RefSeq" id="XP_006252640.1">
    <property type="nucleotide sequence ID" value="XM_006252578.3"/>
</dbReference>
<dbReference type="RefSeq" id="XP_006252641.1">
    <property type="nucleotide sequence ID" value="XM_006252579.5"/>
</dbReference>
<dbReference type="RefSeq" id="XP_006252642.1">
    <property type="nucleotide sequence ID" value="XM_006252580.2"/>
</dbReference>
<dbReference type="RefSeq" id="XP_008769206.1">
    <property type="nucleotide sequence ID" value="XM_008770984.4"/>
</dbReference>
<dbReference type="RefSeq" id="XP_008769207.1">
    <property type="nucleotide sequence ID" value="XM_008770985.2"/>
</dbReference>
<dbReference type="RefSeq" id="XP_063131200.1">
    <property type="nucleotide sequence ID" value="XM_063275130.1"/>
</dbReference>
<dbReference type="RefSeq" id="XP_063131201.1">
    <property type="nucleotide sequence ID" value="XM_063275131.1"/>
</dbReference>
<dbReference type="RefSeq" id="XP_063131202.1">
    <property type="nucleotide sequence ID" value="XM_063275132.1"/>
</dbReference>
<dbReference type="SMR" id="Q6UPE0"/>
<dbReference type="FunCoup" id="Q6UPE0">
    <property type="interactions" value="221"/>
</dbReference>
<dbReference type="STRING" id="10116.ENSRNOP00000021407"/>
<dbReference type="iPTMnet" id="Q6UPE0"/>
<dbReference type="PhosphoSitePlus" id="Q6UPE0"/>
<dbReference type="PaxDb" id="10116-ENSRNOP00000021407"/>
<dbReference type="Ensembl" id="ENSRNOT00000021407.5">
    <property type="protein sequence ID" value="ENSRNOP00000021407.4"/>
    <property type="gene ID" value="ENSRNOG00000015859.6"/>
</dbReference>
<dbReference type="GeneID" id="290551"/>
<dbReference type="KEGG" id="rno:290551"/>
<dbReference type="UCSC" id="RGD:735166">
    <property type="organism name" value="rat"/>
</dbReference>
<dbReference type="AGR" id="RGD:735166"/>
<dbReference type="CTD" id="55349"/>
<dbReference type="RGD" id="735166">
    <property type="gene designation" value="Chdh"/>
</dbReference>
<dbReference type="eggNOG" id="KOG1238">
    <property type="taxonomic scope" value="Eukaryota"/>
</dbReference>
<dbReference type="GeneTree" id="ENSGT00530000063260"/>
<dbReference type="HOGENOM" id="CLU_002865_7_1_1"/>
<dbReference type="InParanoid" id="Q6UPE0"/>
<dbReference type="OMA" id="NHFESCA"/>
<dbReference type="OrthoDB" id="269227at2759"/>
<dbReference type="PhylomeDB" id="Q6UPE0"/>
<dbReference type="TreeFam" id="TF313911"/>
<dbReference type="BRENDA" id="1.1.99.1">
    <property type="organism ID" value="5301"/>
</dbReference>
<dbReference type="Reactome" id="R-RNO-6798163">
    <property type="pathway name" value="Choline catabolism"/>
</dbReference>
<dbReference type="UniPathway" id="UPA00529">
    <property type="reaction ID" value="UER00385"/>
</dbReference>
<dbReference type="PRO" id="PR:Q6UPE0"/>
<dbReference type="Proteomes" id="UP000002494">
    <property type="component" value="Chromosome 16"/>
</dbReference>
<dbReference type="Proteomes" id="UP000234681">
    <property type="component" value="Chromosome 16"/>
</dbReference>
<dbReference type="Bgee" id="ENSRNOG00000015859">
    <property type="expression patterns" value="Expressed in liver and 15 other cell types or tissues"/>
</dbReference>
<dbReference type="GO" id="GO:0005743">
    <property type="term" value="C:mitochondrial inner membrane"/>
    <property type="evidence" value="ECO:0000314"/>
    <property type="project" value="RGD"/>
</dbReference>
<dbReference type="GO" id="GO:0008812">
    <property type="term" value="F:choline dehydrogenase activity"/>
    <property type="evidence" value="ECO:0000315"/>
    <property type="project" value="RGD"/>
</dbReference>
<dbReference type="GO" id="GO:0050660">
    <property type="term" value="F:flavin adenine dinucleotide binding"/>
    <property type="evidence" value="ECO:0007669"/>
    <property type="project" value="InterPro"/>
</dbReference>
<dbReference type="GO" id="GO:0019285">
    <property type="term" value="P:glycine betaine biosynthetic process from choline"/>
    <property type="evidence" value="ECO:0007669"/>
    <property type="project" value="UniProtKB-UniPathway"/>
</dbReference>
<dbReference type="Gene3D" id="3.50.50.60">
    <property type="entry name" value="FAD/NAD(P)-binding domain"/>
    <property type="match status" value="1"/>
</dbReference>
<dbReference type="Gene3D" id="3.30.560.10">
    <property type="entry name" value="Glucose Oxidase, domain 3"/>
    <property type="match status" value="1"/>
</dbReference>
<dbReference type="InterPro" id="IPR036188">
    <property type="entry name" value="FAD/NAD-bd_sf"/>
</dbReference>
<dbReference type="InterPro" id="IPR012132">
    <property type="entry name" value="GMC_OxRdtase"/>
</dbReference>
<dbReference type="InterPro" id="IPR000172">
    <property type="entry name" value="GMC_OxRdtase_N"/>
</dbReference>
<dbReference type="InterPro" id="IPR007867">
    <property type="entry name" value="GMC_OxRtase_C"/>
</dbReference>
<dbReference type="NCBIfam" id="NF002550">
    <property type="entry name" value="PRK02106.1"/>
    <property type="match status" value="1"/>
</dbReference>
<dbReference type="PANTHER" id="PTHR11552:SF147">
    <property type="entry name" value="CHOLINE DEHYDROGENASE, MITOCHONDRIAL"/>
    <property type="match status" value="1"/>
</dbReference>
<dbReference type="PANTHER" id="PTHR11552">
    <property type="entry name" value="GLUCOSE-METHANOL-CHOLINE GMC OXIDOREDUCTASE"/>
    <property type="match status" value="1"/>
</dbReference>
<dbReference type="Pfam" id="PF05199">
    <property type="entry name" value="GMC_oxred_C"/>
    <property type="match status" value="1"/>
</dbReference>
<dbReference type="Pfam" id="PF00732">
    <property type="entry name" value="GMC_oxred_N"/>
    <property type="match status" value="1"/>
</dbReference>
<dbReference type="PIRSF" id="PIRSF000137">
    <property type="entry name" value="Alcohol_oxidase"/>
    <property type="match status" value="1"/>
</dbReference>
<dbReference type="SUPFAM" id="SSF54373">
    <property type="entry name" value="FAD-linked reductases, C-terminal domain"/>
    <property type="match status" value="1"/>
</dbReference>
<dbReference type="SUPFAM" id="SSF51905">
    <property type="entry name" value="FAD/NAD(P)-binding domain"/>
    <property type="match status" value="1"/>
</dbReference>
<dbReference type="PROSITE" id="PS00623">
    <property type="entry name" value="GMC_OXRED_1"/>
    <property type="match status" value="1"/>
</dbReference>
<dbReference type="PROSITE" id="PS00624">
    <property type="entry name" value="GMC_OXRED_2"/>
    <property type="match status" value="1"/>
</dbReference>
<sequence length="599" mass="66389">MWQVLRSWSKRCLSPRGALAWAAQGQPRPPCSCAVASAASGGKDEYTFIVVGAGSAGCVLANRLTEDPNHRVLLLEAGPKDLLMGSKRLQWKIHMPAALVANLCDDKYNWYYHTEAQPGLDGRVLYWPRGRVWGGSSSLNAMVYIRGHAEDYNRWHRQGAEGWDYAHCLPYFRKAQKHELGANMYRGGDGPLHVSRGKTNHPLHQAFLQAARQAGYPFTEDMNGFQQEGFGWMDMTIHQGKRWSTASAYLRPALSRPNLRAEVQTLVSRVLFEGTRAVGVEYIKDGQSHKAYVSREVILSGGAINSPQLLMLSGVGNADDLKKLGIPVVCHLPGVGQNLQDHLEIYIQHACTQPITLHSAQKPLRKVCIGLEWLWRFTGDGATAHLETGGFIRSRPGVPHPDIQFHFLPSQVIDHGRKPTQQEAYQVHVGTMRATSVGWLKLRSTNPQDHPMINPNYLSTETDVEDFRQCVKLTREIFAQEAFAPFRGKELQPGSHVQSDKEIDAFVRAKADSAYHPSCTCKMGQPSDPTAVVDQQTRVIGVENLRVIDASIMPSVVSGNLNAPTIMIAEKAADVIKGCPALGDENVPVYKPQTLDTQR</sequence>
<name>CHDH_RAT</name>
<accession>Q6UPE0</accession>
<gene>
    <name type="primary">Chdh</name>
</gene>
<protein>
    <recommendedName>
        <fullName>Choline dehydrogenase, mitochondrial</fullName>
        <shortName>CDH</shortName>
        <shortName>CHD</shortName>
        <ecNumber evidence="6">1.1.99.1</ecNumber>
    </recommendedName>
</protein>
<feature type="transit peptide" description="Mitochondrion" evidence="4">
    <location>
        <begin position="1"/>
        <end position="34"/>
    </location>
</feature>
<feature type="chain" id="PRO_0000418439" description="Choline dehydrogenase, mitochondrial">
    <location>
        <begin position="35"/>
        <end position="599"/>
    </location>
</feature>
<feature type="active site" description="Proton acceptor" evidence="2">
    <location>
        <position position="516"/>
    </location>
</feature>
<feature type="binding site" evidence="1">
    <location>
        <begin position="47"/>
        <end position="79"/>
    </location>
    <ligand>
        <name>FAD</name>
        <dbReference type="ChEBI" id="CHEBI:57692"/>
    </ligand>
</feature>
<feature type="modified residue" description="N6-succinyllysine" evidence="3">
    <location>
        <position position="441"/>
    </location>
</feature>
<feature type="modified residue" description="N6-acetyllysine; alternate" evidence="3">
    <location>
        <position position="489"/>
    </location>
</feature>
<feature type="modified residue" description="N6-succinyllysine; alternate" evidence="3">
    <location>
        <position position="489"/>
    </location>
</feature>
<feature type="modified residue" description="N6-acetyllysine; alternate" evidence="3">
    <location>
        <position position="501"/>
    </location>
</feature>
<feature type="modified residue" description="N6-succinyllysine; alternate" evidence="3">
    <location>
        <position position="501"/>
    </location>
</feature>
<keyword id="KW-0007">Acetylation</keyword>
<keyword id="KW-0903">Direct protein sequencing</keyword>
<keyword id="KW-0274">FAD</keyword>
<keyword id="KW-0285">Flavoprotein</keyword>
<keyword id="KW-0472">Membrane</keyword>
<keyword id="KW-0496">Mitochondrion</keyword>
<keyword id="KW-0999">Mitochondrion inner membrane</keyword>
<keyword id="KW-0560">Oxidoreductase</keyword>
<keyword id="KW-1185">Reference proteome</keyword>
<keyword id="KW-0809">Transit peptide</keyword>
<reference key="1">
    <citation type="journal article" date="2003" name="Biochem. Biophys. Res. Commun.">
        <title>Functional expression and processing of rat choline dehydrogenase precursor.</title>
        <authorList>
            <person name="Huang S."/>
            <person name="Lin Q."/>
        </authorList>
    </citation>
    <scope>NUCLEOTIDE SEQUENCE [MRNA]</scope>
    <scope>PROTEIN SEQUENCE OF 35-48</scope>
    <scope>TRANSIT PEPTIDE CLEAVAGE SITE</scope>
    <scope>SUBCELLULAR LOCATION</scope>
    <scope>TISSUE SPECIFICITY</scope>
    <scope>CATALYTIC ACTIVITY</scope>
    <source>
        <strain>Sprague-Dawley</strain>
    </source>
</reference>
<reference key="2">
    <citation type="journal article" date="2004" name="Nature">
        <title>Genome sequence of the Brown Norway rat yields insights into mammalian evolution.</title>
        <authorList>
            <person name="Gibbs R.A."/>
            <person name="Weinstock G.M."/>
            <person name="Metzker M.L."/>
            <person name="Muzny D.M."/>
            <person name="Sodergren E.J."/>
            <person name="Scherer S."/>
            <person name="Scott G."/>
            <person name="Steffen D."/>
            <person name="Worley K.C."/>
            <person name="Burch P.E."/>
            <person name="Okwuonu G."/>
            <person name="Hines S."/>
            <person name="Lewis L."/>
            <person name="Deramo C."/>
            <person name="Delgado O."/>
            <person name="Dugan-Rocha S."/>
            <person name="Miner G."/>
            <person name="Morgan M."/>
            <person name="Hawes A."/>
            <person name="Gill R."/>
            <person name="Holt R.A."/>
            <person name="Adams M.D."/>
            <person name="Amanatides P.G."/>
            <person name="Baden-Tillson H."/>
            <person name="Barnstead M."/>
            <person name="Chin S."/>
            <person name="Evans C.A."/>
            <person name="Ferriera S."/>
            <person name="Fosler C."/>
            <person name="Glodek A."/>
            <person name="Gu Z."/>
            <person name="Jennings D."/>
            <person name="Kraft C.L."/>
            <person name="Nguyen T."/>
            <person name="Pfannkoch C.M."/>
            <person name="Sitter C."/>
            <person name="Sutton G.G."/>
            <person name="Venter J.C."/>
            <person name="Woodage T."/>
            <person name="Smith D."/>
            <person name="Lee H.-M."/>
            <person name="Gustafson E."/>
            <person name="Cahill P."/>
            <person name="Kana A."/>
            <person name="Doucette-Stamm L."/>
            <person name="Weinstock K."/>
            <person name="Fechtel K."/>
            <person name="Weiss R.B."/>
            <person name="Dunn D.M."/>
            <person name="Green E.D."/>
            <person name="Blakesley R.W."/>
            <person name="Bouffard G.G."/>
            <person name="De Jong P.J."/>
            <person name="Osoegawa K."/>
            <person name="Zhu B."/>
            <person name="Marra M."/>
            <person name="Schein J."/>
            <person name="Bosdet I."/>
            <person name="Fjell C."/>
            <person name="Jones S."/>
            <person name="Krzywinski M."/>
            <person name="Mathewson C."/>
            <person name="Siddiqui A."/>
            <person name="Wye N."/>
            <person name="McPherson J."/>
            <person name="Zhao S."/>
            <person name="Fraser C.M."/>
            <person name="Shetty J."/>
            <person name="Shatsman S."/>
            <person name="Geer K."/>
            <person name="Chen Y."/>
            <person name="Abramzon S."/>
            <person name="Nierman W.C."/>
            <person name="Havlak P.H."/>
            <person name="Chen R."/>
            <person name="Durbin K.J."/>
            <person name="Egan A."/>
            <person name="Ren Y."/>
            <person name="Song X.-Z."/>
            <person name="Li B."/>
            <person name="Liu Y."/>
            <person name="Qin X."/>
            <person name="Cawley S."/>
            <person name="Cooney A.J."/>
            <person name="D'Souza L.M."/>
            <person name="Martin K."/>
            <person name="Wu J.Q."/>
            <person name="Gonzalez-Garay M.L."/>
            <person name="Jackson A.R."/>
            <person name="Kalafus K.J."/>
            <person name="McLeod M.P."/>
            <person name="Milosavljevic A."/>
            <person name="Virk D."/>
            <person name="Volkov A."/>
            <person name="Wheeler D.A."/>
            <person name="Zhang Z."/>
            <person name="Bailey J.A."/>
            <person name="Eichler E.E."/>
            <person name="Tuzun E."/>
            <person name="Birney E."/>
            <person name="Mongin E."/>
            <person name="Ureta-Vidal A."/>
            <person name="Woodwark C."/>
            <person name="Zdobnov E."/>
            <person name="Bork P."/>
            <person name="Suyama M."/>
            <person name="Torrents D."/>
            <person name="Alexandersson M."/>
            <person name="Trask B.J."/>
            <person name="Young J.M."/>
            <person name="Huang H."/>
            <person name="Wang H."/>
            <person name="Xing H."/>
            <person name="Daniels S."/>
            <person name="Gietzen D."/>
            <person name="Schmidt J."/>
            <person name="Stevens K."/>
            <person name="Vitt U."/>
            <person name="Wingrove J."/>
            <person name="Camara F."/>
            <person name="Mar Alba M."/>
            <person name="Abril J.F."/>
            <person name="Guigo R."/>
            <person name="Smit A."/>
            <person name="Dubchak I."/>
            <person name="Rubin E.M."/>
            <person name="Couronne O."/>
            <person name="Poliakov A."/>
            <person name="Huebner N."/>
            <person name="Ganten D."/>
            <person name="Goesele C."/>
            <person name="Hummel O."/>
            <person name="Kreitler T."/>
            <person name="Lee Y.-A."/>
            <person name="Monti J."/>
            <person name="Schulz H."/>
            <person name="Zimdahl H."/>
            <person name="Himmelbauer H."/>
            <person name="Lehrach H."/>
            <person name="Jacob H.J."/>
            <person name="Bromberg S."/>
            <person name="Gullings-Handley J."/>
            <person name="Jensen-Seaman M.I."/>
            <person name="Kwitek A.E."/>
            <person name="Lazar J."/>
            <person name="Pasko D."/>
            <person name="Tonellato P.J."/>
            <person name="Twigger S."/>
            <person name="Ponting C.P."/>
            <person name="Duarte J.M."/>
            <person name="Rice S."/>
            <person name="Goodstadt L."/>
            <person name="Beatson S.A."/>
            <person name="Emes R.D."/>
            <person name="Winter E.E."/>
            <person name="Webber C."/>
            <person name="Brandt P."/>
            <person name="Nyakatura G."/>
            <person name="Adetobi M."/>
            <person name="Chiaromonte F."/>
            <person name="Elnitski L."/>
            <person name="Eswara P."/>
            <person name="Hardison R.C."/>
            <person name="Hou M."/>
            <person name="Kolbe D."/>
            <person name="Makova K."/>
            <person name="Miller W."/>
            <person name="Nekrutenko A."/>
            <person name="Riemer C."/>
            <person name="Schwartz S."/>
            <person name="Taylor J."/>
            <person name="Yang S."/>
            <person name="Zhang Y."/>
            <person name="Lindpaintner K."/>
            <person name="Andrews T.D."/>
            <person name="Caccamo M."/>
            <person name="Clamp M."/>
            <person name="Clarke L."/>
            <person name="Curwen V."/>
            <person name="Durbin R.M."/>
            <person name="Eyras E."/>
            <person name="Searle S.M."/>
            <person name="Cooper G.M."/>
            <person name="Batzoglou S."/>
            <person name="Brudno M."/>
            <person name="Sidow A."/>
            <person name="Stone E.A."/>
            <person name="Payseur B.A."/>
            <person name="Bourque G."/>
            <person name="Lopez-Otin C."/>
            <person name="Puente X.S."/>
            <person name="Chakrabarti K."/>
            <person name="Chatterji S."/>
            <person name="Dewey C."/>
            <person name="Pachter L."/>
            <person name="Bray N."/>
            <person name="Yap V.B."/>
            <person name="Caspi A."/>
            <person name="Tesler G."/>
            <person name="Pevzner P.A."/>
            <person name="Haussler D."/>
            <person name="Roskin K.M."/>
            <person name="Baertsch R."/>
            <person name="Clawson H."/>
            <person name="Furey T.S."/>
            <person name="Hinrichs A.S."/>
            <person name="Karolchik D."/>
            <person name="Kent W.J."/>
            <person name="Rosenbloom K.R."/>
            <person name="Trumbower H."/>
            <person name="Weirauch M."/>
            <person name="Cooper D.N."/>
            <person name="Stenson P.D."/>
            <person name="Ma B."/>
            <person name="Brent M."/>
            <person name="Arumugam M."/>
            <person name="Shteynberg D."/>
            <person name="Copley R.R."/>
            <person name="Taylor M.S."/>
            <person name="Riethman H."/>
            <person name="Mudunuri U."/>
            <person name="Peterson J."/>
            <person name="Guyer M."/>
            <person name="Felsenfeld A."/>
            <person name="Old S."/>
            <person name="Mockrin S."/>
            <person name="Collins F.S."/>
        </authorList>
    </citation>
    <scope>NUCLEOTIDE SEQUENCE [LARGE SCALE GENOMIC DNA]</scope>
    <source>
        <strain>Brown Norway</strain>
    </source>
</reference>
<reference key="3">
    <citation type="submission" date="2005-07" db="EMBL/GenBank/DDBJ databases">
        <authorList>
            <person name="Mural R.J."/>
            <person name="Li P.W."/>
            <person name="Adams M.D."/>
            <person name="Amanatides P.G."/>
            <person name="Baden-Tillson H."/>
            <person name="Barnstead M."/>
            <person name="Chin S.H."/>
            <person name="Dew I."/>
            <person name="Evans C.A."/>
            <person name="Ferriera S."/>
            <person name="Flanigan M."/>
            <person name="Fosler C."/>
            <person name="Glodek A."/>
            <person name="Gu Z."/>
            <person name="Holt R.A."/>
            <person name="Jennings D."/>
            <person name="Kraft C.L."/>
            <person name="Lu F."/>
            <person name="Nguyen T."/>
            <person name="Nusskern D.R."/>
            <person name="Pfannkoch C.M."/>
            <person name="Sitter C."/>
            <person name="Sutton G.G."/>
            <person name="Venter J.C."/>
            <person name="Wang Z."/>
            <person name="Woodage T."/>
            <person name="Zheng X.H."/>
            <person name="Zhong F."/>
        </authorList>
    </citation>
    <scope>NUCLEOTIDE SEQUENCE [LARGE SCALE GENOMIC DNA]</scope>
    <source>
        <strain>Brown Norway</strain>
    </source>
</reference>
<reference key="4">
    <citation type="journal article" date="2004" name="Genome Res.">
        <title>The status, quality, and expansion of the NIH full-length cDNA project: the Mammalian Gene Collection (MGC).</title>
        <authorList>
            <consortium name="The MGC Project Team"/>
        </authorList>
    </citation>
    <scope>NUCLEOTIDE SEQUENCE [LARGE SCALE MRNA]</scope>
    <source>
        <tissue>Kidney</tissue>
    </source>
</reference>
<evidence type="ECO:0000250" key="1"/>
<evidence type="ECO:0000250" key="2">
    <source>
        <dbReference type="UniProtKB" id="E4QP00"/>
    </source>
</evidence>
<evidence type="ECO:0000250" key="3">
    <source>
        <dbReference type="UniProtKB" id="Q8BJ64"/>
    </source>
</evidence>
<evidence type="ECO:0000269" key="4">
    <source>
    </source>
</evidence>
<evidence type="ECO:0000305" key="5"/>
<evidence type="ECO:0000305" key="6">
    <source>
    </source>
</evidence>
<proteinExistence type="evidence at protein level"/>
<comment type="catalytic activity">
    <reaction evidence="6">
        <text>choline + A = betaine aldehyde + AH2</text>
        <dbReference type="Rhea" id="RHEA:17433"/>
        <dbReference type="ChEBI" id="CHEBI:13193"/>
        <dbReference type="ChEBI" id="CHEBI:15354"/>
        <dbReference type="ChEBI" id="CHEBI:15710"/>
        <dbReference type="ChEBI" id="CHEBI:17499"/>
        <dbReference type="EC" id="1.1.99.1"/>
    </reaction>
    <physiologicalReaction direction="left-to-right" evidence="6">
        <dbReference type="Rhea" id="RHEA:17434"/>
    </physiologicalReaction>
</comment>
<comment type="cofactor">
    <cofactor evidence="1">
        <name>FAD</name>
        <dbReference type="ChEBI" id="CHEBI:57692"/>
    </cofactor>
</comment>
<comment type="pathway">
    <text>Amine and polyamine biosynthesis; betaine biosynthesis via choline pathway; betaine aldehyde from choline (cytochrome c reductase route): step 1/1.</text>
</comment>
<comment type="subcellular location">
    <subcellularLocation>
        <location evidence="4">Mitochondrion inner membrane</location>
    </subcellularLocation>
</comment>
<comment type="tissue specificity">
    <text evidence="4">Expressed in liver.</text>
</comment>
<comment type="similarity">
    <text evidence="5">Belongs to the GMC oxidoreductase family.</text>
</comment>